<evidence type="ECO:0000250" key="1"/>
<evidence type="ECO:0000305" key="2"/>
<dbReference type="EMBL" id="BC077893">
    <property type="protein sequence ID" value="AAH77893.1"/>
    <property type="molecule type" value="mRNA"/>
</dbReference>
<dbReference type="RefSeq" id="NP_001087012.1">
    <property type="nucleotide sequence ID" value="NM_001093543.1"/>
</dbReference>
<dbReference type="SMR" id="Q6DCU7"/>
<dbReference type="DNASU" id="446847"/>
<dbReference type="GeneID" id="446847"/>
<dbReference type="KEGG" id="xla:446847"/>
<dbReference type="AGR" id="Xenbase:XB-GENE-6255100"/>
<dbReference type="CTD" id="446847"/>
<dbReference type="Xenbase" id="XB-GENE-6255100">
    <property type="gene designation" value="hikeshi.L"/>
</dbReference>
<dbReference type="OMA" id="WWAKFER"/>
<dbReference type="OrthoDB" id="10248398at2759"/>
<dbReference type="Proteomes" id="UP000186698">
    <property type="component" value="Chromosome 2L"/>
</dbReference>
<dbReference type="Bgee" id="446847">
    <property type="expression patterns" value="Expressed in egg cell and 19 other cell types or tissues"/>
</dbReference>
<dbReference type="GO" id="GO:0005829">
    <property type="term" value="C:cytosol"/>
    <property type="evidence" value="ECO:0000250"/>
    <property type="project" value="UniProtKB"/>
</dbReference>
<dbReference type="GO" id="GO:0005634">
    <property type="term" value="C:nucleus"/>
    <property type="evidence" value="ECO:0000250"/>
    <property type="project" value="UniProtKB"/>
</dbReference>
<dbReference type="GO" id="GO:0030544">
    <property type="term" value="F:Hsp70 protein binding"/>
    <property type="evidence" value="ECO:0000250"/>
    <property type="project" value="UniProtKB"/>
</dbReference>
<dbReference type="GO" id="GO:0061608">
    <property type="term" value="F:nuclear import signal receptor activity"/>
    <property type="evidence" value="ECO:0000318"/>
    <property type="project" value="GO_Central"/>
</dbReference>
<dbReference type="GO" id="GO:0034605">
    <property type="term" value="P:cellular response to heat"/>
    <property type="evidence" value="ECO:0000250"/>
    <property type="project" value="UniProtKB"/>
</dbReference>
<dbReference type="GO" id="GO:0006606">
    <property type="term" value="P:protein import into nucleus"/>
    <property type="evidence" value="ECO:0000250"/>
    <property type="project" value="UniProtKB"/>
</dbReference>
<dbReference type="GO" id="GO:0015031">
    <property type="term" value="P:protein transport"/>
    <property type="evidence" value="ECO:0000250"/>
    <property type="project" value="UniProtKB"/>
</dbReference>
<dbReference type="InterPro" id="IPR048364">
    <property type="entry name" value="Hikeshi-like_C"/>
</dbReference>
<dbReference type="InterPro" id="IPR008493">
    <property type="entry name" value="Hikeshi-like_N"/>
</dbReference>
<dbReference type="InterPro" id="IPR031318">
    <property type="entry name" value="OPI10"/>
</dbReference>
<dbReference type="PANTHER" id="PTHR12925">
    <property type="entry name" value="HIKESHI FAMILY MEMBER"/>
    <property type="match status" value="1"/>
</dbReference>
<dbReference type="PANTHER" id="PTHR12925:SF0">
    <property type="entry name" value="PROTEIN HIKESHI"/>
    <property type="match status" value="1"/>
</dbReference>
<dbReference type="Pfam" id="PF21057">
    <property type="entry name" value="Hikeshi-like_C"/>
    <property type="match status" value="1"/>
</dbReference>
<dbReference type="Pfam" id="PF05603">
    <property type="entry name" value="Hikeshi-like_N"/>
    <property type="match status" value="1"/>
</dbReference>
<gene>
    <name type="primary">hikeshi</name>
</gene>
<keyword id="KW-0963">Cytoplasm</keyword>
<keyword id="KW-0539">Nucleus</keyword>
<keyword id="KW-0653">Protein transport</keyword>
<keyword id="KW-1185">Reference proteome</keyword>
<keyword id="KW-0813">Transport</keyword>
<proteinExistence type="evidence at transcript level"/>
<accession>Q6DCU7</accession>
<organism>
    <name type="scientific">Xenopus laevis</name>
    <name type="common">African clawed frog</name>
    <dbReference type="NCBI Taxonomy" id="8355"/>
    <lineage>
        <taxon>Eukaryota</taxon>
        <taxon>Metazoa</taxon>
        <taxon>Chordata</taxon>
        <taxon>Craniata</taxon>
        <taxon>Vertebrata</taxon>
        <taxon>Euteleostomi</taxon>
        <taxon>Amphibia</taxon>
        <taxon>Batrachia</taxon>
        <taxon>Anura</taxon>
        <taxon>Pipoidea</taxon>
        <taxon>Pipidae</taxon>
        <taxon>Xenopodinae</taxon>
        <taxon>Xenopus</taxon>
        <taxon>Xenopus</taxon>
    </lineage>
</organism>
<reference key="1">
    <citation type="submission" date="2004-07" db="EMBL/GenBank/DDBJ databases">
        <authorList>
            <consortium name="NIH - Xenopus Gene Collection (XGC) project"/>
        </authorList>
    </citation>
    <scope>NUCLEOTIDE SEQUENCE [LARGE SCALE MRNA]</scope>
    <source>
        <tissue>Spleen</tissue>
    </source>
</reference>
<feature type="chain" id="PRO_0000245267" description="Protein Hikeshi">
    <location>
        <begin position="1"/>
        <end position="197"/>
    </location>
</feature>
<name>HIKES_XENLA</name>
<protein>
    <recommendedName>
        <fullName>Protein Hikeshi</fullName>
    </recommendedName>
</protein>
<comment type="function">
    <text evidence="1">Acts as a specific nuclear import carrier for hsp70 proteins following heat-shock stress: acts by mediating the nucleoporin-dependent translocation of ATP-bound hsp70 proteins into the nucleus. hsp70 proteins import is required to protect cells from heat shock damages (By similarity).</text>
</comment>
<comment type="subcellular location">
    <subcellularLocation>
        <location evidence="1">Cytoplasm</location>
        <location evidence="1">Cytosol</location>
    </subcellularLocation>
    <subcellularLocation>
        <location evidence="1">Nucleus</location>
    </subcellularLocation>
</comment>
<comment type="similarity">
    <text evidence="2">Belongs to the OPI10 family.</text>
</comment>
<sequence>MFGCLVAGRLVQTDAQQVAEDKFVFNLPDFESINHVVVFMLGTVPFPERMGGSVYFSFPDQTGMPVWTLLGFITNEKPSAIFKISGLKSGEGSQHPFGTMNLPQTPSVAQIGISVELLEQMAQQTPVANAAVSTVDSFTQFTQKMLDNFYNFATSFAVSQAQMIPNPSEVFIPSNVVLKWYENFQRRMAQNPFFWKT</sequence>